<proteinExistence type="inferred from homology"/>
<keyword id="KW-1185">Reference proteome</keyword>
<keyword id="KW-0687">Ribonucleoprotein</keyword>
<keyword id="KW-0689">Ribosomal protein</keyword>
<dbReference type="EMBL" id="DQ489736">
    <property type="protein sequence ID" value="ACA83533.1"/>
    <property type="molecule type" value="Genomic_DNA"/>
</dbReference>
<dbReference type="RefSeq" id="WP_002816117.1">
    <property type="nucleotide sequence ID" value="NC_010471.1"/>
</dbReference>
<dbReference type="SMR" id="B1MWS4"/>
<dbReference type="STRING" id="349519.LCK_01711"/>
<dbReference type="GeneID" id="97505164"/>
<dbReference type="KEGG" id="lci:LCK_01711"/>
<dbReference type="eggNOG" id="COG0230">
    <property type="taxonomic scope" value="Bacteria"/>
</dbReference>
<dbReference type="HOGENOM" id="CLU_129938_2_0_9"/>
<dbReference type="OrthoDB" id="9804164at2"/>
<dbReference type="Proteomes" id="UP000002166">
    <property type="component" value="Chromosome"/>
</dbReference>
<dbReference type="GO" id="GO:1990904">
    <property type="term" value="C:ribonucleoprotein complex"/>
    <property type="evidence" value="ECO:0007669"/>
    <property type="project" value="UniProtKB-KW"/>
</dbReference>
<dbReference type="GO" id="GO:0005840">
    <property type="term" value="C:ribosome"/>
    <property type="evidence" value="ECO:0007669"/>
    <property type="project" value="UniProtKB-KW"/>
</dbReference>
<dbReference type="GO" id="GO:0003735">
    <property type="term" value="F:structural constituent of ribosome"/>
    <property type="evidence" value="ECO:0007669"/>
    <property type="project" value="InterPro"/>
</dbReference>
<dbReference type="GO" id="GO:0006412">
    <property type="term" value="P:translation"/>
    <property type="evidence" value="ECO:0007669"/>
    <property type="project" value="UniProtKB-UniRule"/>
</dbReference>
<dbReference type="FunFam" id="1.10.287.3980:FF:000001">
    <property type="entry name" value="Mitochondrial ribosomal protein L34"/>
    <property type="match status" value="1"/>
</dbReference>
<dbReference type="Gene3D" id="1.10.287.3980">
    <property type="match status" value="1"/>
</dbReference>
<dbReference type="HAMAP" id="MF_00391">
    <property type="entry name" value="Ribosomal_bL34"/>
    <property type="match status" value="1"/>
</dbReference>
<dbReference type="InterPro" id="IPR000271">
    <property type="entry name" value="Ribosomal_bL34"/>
</dbReference>
<dbReference type="InterPro" id="IPR020939">
    <property type="entry name" value="Ribosomal_bL34_CS"/>
</dbReference>
<dbReference type="NCBIfam" id="TIGR01030">
    <property type="entry name" value="rpmH_bact"/>
    <property type="match status" value="1"/>
</dbReference>
<dbReference type="PANTHER" id="PTHR14503:SF4">
    <property type="entry name" value="LARGE RIBOSOMAL SUBUNIT PROTEIN BL34M"/>
    <property type="match status" value="1"/>
</dbReference>
<dbReference type="PANTHER" id="PTHR14503">
    <property type="entry name" value="MITOCHONDRIAL RIBOSOMAL PROTEIN 34 FAMILY MEMBER"/>
    <property type="match status" value="1"/>
</dbReference>
<dbReference type="Pfam" id="PF00468">
    <property type="entry name" value="Ribosomal_L34"/>
    <property type="match status" value="1"/>
</dbReference>
<dbReference type="PROSITE" id="PS00784">
    <property type="entry name" value="RIBOSOMAL_L34"/>
    <property type="match status" value="1"/>
</dbReference>
<feature type="chain" id="PRO_1000196064" description="Large ribosomal subunit protein bL34">
    <location>
        <begin position="1"/>
        <end position="44"/>
    </location>
</feature>
<feature type="region of interest" description="Disordered" evidence="2">
    <location>
        <begin position="1"/>
        <end position="44"/>
    </location>
</feature>
<feature type="compositionally biased region" description="Basic residues" evidence="2">
    <location>
        <begin position="1"/>
        <end position="22"/>
    </location>
</feature>
<feature type="compositionally biased region" description="Basic residues" evidence="2">
    <location>
        <begin position="30"/>
        <end position="44"/>
    </location>
</feature>
<organism>
    <name type="scientific">Leuconostoc citreum (strain KM20)</name>
    <dbReference type="NCBI Taxonomy" id="349519"/>
    <lineage>
        <taxon>Bacteria</taxon>
        <taxon>Bacillati</taxon>
        <taxon>Bacillota</taxon>
        <taxon>Bacilli</taxon>
        <taxon>Lactobacillales</taxon>
        <taxon>Lactobacillaceae</taxon>
        <taxon>Leuconostoc</taxon>
    </lineage>
</organism>
<reference key="1">
    <citation type="journal article" date="2008" name="J. Bacteriol.">
        <title>Complete genome sequence of Leuconostoc citreum KM20.</title>
        <authorList>
            <person name="Kim J.F."/>
            <person name="Jeong H."/>
            <person name="Lee J.-S."/>
            <person name="Choi S.-H."/>
            <person name="Ha M."/>
            <person name="Hur C.-G."/>
            <person name="Kim J.-S."/>
            <person name="Lee S."/>
            <person name="Park H.-S."/>
            <person name="Park Y.-H."/>
            <person name="Oh T.K."/>
        </authorList>
    </citation>
    <scope>NUCLEOTIDE SEQUENCE [LARGE SCALE GENOMIC DNA]</scope>
    <source>
        <strain>KM20</strain>
    </source>
</reference>
<gene>
    <name evidence="1" type="primary">rpmH</name>
    <name type="ordered locus">LCK_01711</name>
</gene>
<sequence length="44" mass="5320">MKRTYQPKKRHRERVHGFRKRMSTSNGRKVLARRRAKGRKVLSA</sequence>
<accession>B1MWS4</accession>
<comment type="similarity">
    <text evidence="1">Belongs to the bacterial ribosomal protein bL34 family.</text>
</comment>
<protein>
    <recommendedName>
        <fullName evidence="1">Large ribosomal subunit protein bL34</fullName>
    </recommendedName>
    <alternativeName>
        <fullName evidence="3">50S ribosomal protein L34</fullName>
    </alternativeName>
</protein>
<evidence type="ECO:0000255" key="1">
    <source>
        <dbReference type="HAMAP-Rule" id="MF_00391"/>
    </source>
</evidence>
<evidence type="ECO:0000256" key="2">
    <source>
        <dbReference type="SAM" id="MobiDB-lite"/>
    </source>
</evidence>
<evidence type="ECO:0000305" key="3"/>
<name>RL34_LEUCK</name>